<evidence type="ECO:0000250" key="1"/>
<evidence type="ECO:0000255" key="2">
    <source>
        <dbReference type="HAMAP-Rule" id="MF_00403"/>
    </source>
</evidence>
<evidence type="ECO:0000305" key="3"/>
<feature type="chain" id="PRO_0000238136" description="Small ribosomal subunit protein uS12">
    <location>
        <begin position="1"/>
        <end position="122"/>
    </location>
</feature>
<feature type="modified residue" description="3-methylthioaspartic acid" evidence="1">
    <location>
        <position position="89"/>
    </location>
</feature>
<protein>
    <recommendedName>
        <fullName evidence="2">Small ribosomal subunit protein uS12</fullName>
    </recommendedName>
    <alternativeName>
        <fullName evidence="3">30S ribosomal protein S12</fullName>
    </alternativeName>
</protein>
<reference key="1">
    <citation type="journal article" date="2006" name="PLoS Genet.">
        <title>Comparative genomics of emerging human ehrlichiosis agents.</title>
        <authorList>
            <person name="Dunning Hotopp J.C."/>
            <person name="Lin M."/>
            <person name="Madupu R."/>
            <person name="Crabtree J."/>
            <person name="Angiuoli S.V."/>
            <person name="Eisen J.A."/>
            <person name="Seshadri R."/>
            <person name="Ren Q."/>
            <person name="Wu M."/>
            <person name="Utterback T.R."/>
            <person name="Smith S."/>
            <person name="Lewis M."/>
            <person name="Khouri H."/>
            <person name="Zhang C."/>
            <person name="Niu H."/>
            <person name="Lin Q."/>
            <person name="Ohashi N."/>
            <person name="Zhi N."/>
            <person name="Nelson W.C."/>
            <person name="Brinkac L.M."/>
            <person name="Dodson R.J."/>
            <person name="Rosovitz M.J."/>
            <person name="Sundaram J.P."/>
            <person name="Daugherty S.C."/>
            <person name="Davidsen T."/>
            <person name="Durkin A.S."/>
            <person name="Gwinn M.L."/>
            <person name="Haft D.H."/>
            <person name="Selengut J.D."/>
            <person name="Sullivan S.A."/>
            <person name="Zafar N."/>
            <person name="Zhou L."/>
            <person name="Benahmed F."/>
            <person name="Forberger H."/>
            <person name="Halpin R."/>
            <person name="Mulligan S."/>
            <person name="Robinson J."/>
            <person name="White O."/>
            <person name="Rikihisa Y."/>
            <person name="Tettelin H."/>
        </authorList>
    </citation>
    <scope>NUCLEOTIDE SEQUENCE [LARGE SCALE GENOMIC DNA]</scope>
    <source>
        <strain>ATCC VR-367 / Miyayama</strain>
    </source>
</reference>
<organism>
    <name type="scientific">Neorickettsia sennetsu (strain ATCC VR-367 / Miyayama)</name>
    <name type="common">Ehrlichia sennetsu</name>
    <dbReference type="NCBI Taxonomy" id="222891"/>
    <lineage>
        <taxon>Bacteria</taxon>
        <taxon>Pseudomonadati</taxon>
        <taxon>Pseudomonadota</taxon>
        <taxon>Alphaproteobacteria</taxon>
        <taxon>Rickettsiales</taxon>
        <taxon>Anaplasmataceae</taxon>
        <taxon>Neorickettsia</taxon>
    </lineage>
</organism>
<comment type="function">
    <text evidence="2">With S4 and S5 plays an important role in translational accuracy.</text>
</comment>
<comment type="function">
    <text evidence="2">Interacts with and stabilizes bases of the 16S rRNA that are involved in tRNA selection in the A site and with the mRNA backbone. Located at the interface of the 30S and 50S subunits, it traverses the body of the 30S subunit contacting proteins on the other side and probably holding the rRNA structure together. The combined cluster of proteins S8, S12 and S17 appears to hold together the shoulder and platform of the 30S subunit.</text>
</comment>
<comment type="subunit">
    <text evidence="2">Part of the 30S ribosomal subunit. Contacts proteins S8 and S17. May interact with IF1 in the 30S initiation complex.</text>
</comment>
<comment type="similarity">
    <text evidence="2">Belongs to the universal ribosomal protein uS12 family.</text>
</comment>
<comment type="sequence caution" evidence="3">
    <conflict type="erroneous initiation">
        <sequence resource="EMBL-CDS" id="ABD46294"/>
    </conflict>
</comment>
<sequence length="122" mass="13479">MPTINQLVRKPRKTPARINRVPALNKNPLKRGICSKVYTTTPKKPNSALRKVARVRLSGGAEVIAYIPGEGHNLQEHSVVCIRGGRVKDLPGVRYHIVRGVFDTEGVKGRKKGRSKYGAKKS</sequence>
<proteinExistence type="inferred from homology"/>
<accession>Q2GD80</accession>
<keyword id="KW-0488">Methylation</keyword>
<keyword id="KW-0687">Ribonucleoprotein</keyword>
<keyword id="KW-0689">Ribosomal protein</keyword>
<keyword id="KW-0694">RNA-binding</keyword>
<keyword id="KW-0699">rRNA-binding</keyword>
<keyword id="KW-0820">tRNA-binding</keyword>
<gene>
    <name evidence="2" type="primary">rpsL</name>
    <name type="ordered locus">NSE_0689</name>
</gene>
<name>RS12_NEOSM</name>
<dbReference type="EMBL" id="CP000237">
    <property type="protein sequence ID" value="ABD46294.1"/>
    <property type="status" value="ALT_INIT"/>
    <property type="molecule type" value="Genomic_DNA"/>
</dbReference>
<dbReference type="RefSeq" id="WP_011452072.1">
    <property type="nucleotide sequence ID" value="NC_007798.1"/>
</dbReference>
<dbReference type="SMR" id="Q2GD80"/>
<dbReference type="STRING" id="222891.NSE_0689"/>
<dbReference type="KEGG" id="nse:NSE_0689"/>
<dbReference type="eggNOG" id="COG0048">
    <property type="taxonomic scope" value="Bacteria"/>
</dbReference>
<dbReference type="HOGENOM" id="CLU_104295_1_2_5"/>
<dbReference type="OrthoDB" id="9802366at2"/>
<dbReference type="Proteomes" id="UP000001942">
    <property type="component" value="Chromosome"/>
</dbReference>
<dbReference type="GO" id="GO:0015935">
    <property type="term" value="C:small ribosomal subunit"/>
    <property type="evidence" value="ECO:0007669"/>
    <property type="project" value="InterPro"/>
</dbReference>
<dbReference type="GO" id="GO:0019843">
    <property type="term" value="F:rRNA binding"/>
    <property type="evidence" value="ECO:0007669"/>
    <property type="project" value="UniProtKB-UniRule"/>
</dbReference>
<dbReference type="GO" id="GO:0003735">
    <property type="term" value="F:structural constituent of ribosome"/>
    <property type="evidence" value="ECO:0007669"/>
    <property type="project" value="InterPro"/>
</dbReference>
<dbReference type="GO" id="GO:0000049">
    <property type="term" value="F:tRNA binding"/>
    <property type="evidence" value="ECO:0007669"/>
    <property type="project" value="UniProtKB-UniRule"/>
</dbReference>
<dbReference type="GO" id="GO:0006412">
    <property type="term" value="P:translation"/>
    <property type="evidence" value="ECO:0007669"/>
    <property type="project" value="UniProtKB-UniRule"/>
</dbReference>
<dbReference type="CDD" id="cd03368">
    <property type="entry name" value="Ribosomal_S12"/>
    <property type="match status" value="1"/>
</dbReference>
<dbReference type="FunFam" id="2.40.50.140:FF:000001">
    <property type="entry name" value="30S ribosomal protein S12"/>
    <property type="match status" value="1"/>
</dbReference>
<dbReference type="Gene3D" id="2.40.50.140">
    <property type="entry name" value="Nucleic acid-binding proteins"/>
    <property type="match status" value="1"/>
</dbReference>
<dbReference type="HAMAP" id="MF_00403_B">
    <property type="entry name" value="Ribosomal_uS12_B"/>
    <property type="match status" value="1"/>
</dbReference>
<dbReference type="InterPro" id="IPR012340">
    <property type="entry name" value="NA-bd_OB-fold"/>
</dbReference>
<dbReference type="InterPro" id="IPR006032">
    <property type="entry name" value="Ribosomal_uS12"/>
</dbReference>
<dbReference type="InterPro" id="IPR005679">
    <property type="entry name" value="Ribosomal_uS12_bac"/>
</dbReference>
<dbReference type="NCBIfam" id="TIGR00981">
    <property type="entry name" value="rpsL_bact"/>
    <property type="match status" value="1"/>
</dbReference>
<dbReference type="PANTHER" id="PTHR11652">
    <property type="entry name" value="30S RIBOSOMAL PROTEIN S12 FAMILY MEMBER"/>
    <property type="match status" value="1"/>
</dbReference>
<dbReference type="Pfam" id="PF00164">
    <property type="entry name" value="Ribosom_S12_S23"/>
    <property type="match status" value="1"/>
</dbReference>
<dbReference type="PIRSF" id="PIRSF002133">
    <property type="entry name" value="Ribosomal_S12/S23"/>
    <property type="match status" value="1"/>
</dbReference>
<dbReference type="PRINTS" id="PR01034">
    <property type="entry name" value="RIBOSOMALS12"/>
</dbReference>
<dbReference type="SUPFAM" id="SSF50249">
    <property type="entry name" value="Nucleic acid-binding proteins"/>
    <property type="match status" value="1"/>
</dbReference>
<dbReference type="PROSITE" id="PS00055">
    <property type="entry name" value="RIBOSOMAL_S12"/>
    <property type="match status" value="1"/>
</dbReference>